<reference key="1">
    <citation type="journal article" date="2007" name="J. Bacteriol.">
        <title>Genome sequence of Avery's virulent serotype 2 strain D39 of Streptococcus pneumoniae and comparison with that of unencapsulated laboratory strain R6.</title>
        <authorList>
            <person name="Lanie J.A."/>
            <person name="Ng W.-L."/>
            <person name="Kazmierczak K.M."/>
            <person name="Andrzejewski T.M."/>
            <person name="Davidsen T.M."/>
            <person name="Wayne K.J."/>
            <person name="Tettelin H."/>
            <person name="Glass J.I."/>
            <person name="Winkler M.E."/>
        </authorList>
    </citation>
    <scope>NUCLEOTIDE SEQUENCE [LARGE SCALE GENOMIC DNA]</scope>
    <source>
        <strain>D39 / NCTC 7466</strain>
    </source>
</reference>
<accession>Q04ML9</accession>
<protein>
    <recommendedName>
        <fullName evidence="1">Small ribosomal subunit protein uS5</fullName>
    </recommendedName>
    <alternativeName>
        <fullName evidence="2">30S ribosomal protein S5</fullName>
    </alternativeName>
</protein>
<comment type="function">
    <text evidence="1">With S4 and S12 plays an important role in translational accuracy.</text>
</comment>
<comment type="function">
    <text evidence="1">Located at the back of the 30S subunit body where it stabilizes the conformation of the head with respect to the body.</text>
</comment>
<comment type="subunit">
    <text evidence="1">Part of the 30S ribosomal subunit. Contacts proteins S4 and S8.</text>
</comment>
<comment type="domain">
    <text>The N-terminal domain interacts with the head of the 30S subunit; the C-terminal domain interacts with the body and contacts protein S4. The interaction surface between S4 and S5 is involved in control of translational fidelity.</text>
</comment>
<comment type="similarity">
    <text evidence="1">Belongs to the universal ribosomal protein uS5 family.</text>
</comment>
<organism>
    <name type="scientific">Streptococcus pneumoniae serotype 2 (strain D39 / NCTC 7466)</name>
    <dbReference type="NCBI Taxonomy" id="373153"/>
    <lineage>
        <taxon>Bacteria</taxon>
        <taxon>Bacillati</taxon>
        <taxon>Bacillota</taxon>
        <taxon>Bacilli</taxon>
        <taxon>Lactobacillales</taxon>
        <taxon>Streptococcaceae</taxon>
        <taxon>Streptococcus</taxon>
    </lineage>
</organism>
<name>RS5_STRP2</name>
<gene>
    <name evidence="1" type="primary">rpsE</name>
    <name type="ordered locus">SPD_0210</name>
</gene>
<dbReference type="EMBL" id="CP000410">
    <property type="protein sequence ID" value="ABJ53791.1"/>
    <property type="molecule type" value="Genomic_DNA"/>
</dbReference>
<dbReference type="RefSeq" id="WP_000874201.1">
    <property type="nucleotide sequence ID" value="NZ_JAMLJR010000002.1"/>
</dbReference>
<dbReference type="SMR" id="Q04ML9"/>
<dbReference type="PaxDb" id="373153-SPD_0210"/>
<dbReference type="GeneID" id="45652292"/>
<dbReference type="KEGG" id="spd:SPD_0210"/>
<dbReference type="eggNOG" id="COG0098">
    <property type="taxonomic scope" value="Bacteria"/>
</dbReference>
<dbReference type="HOGENOM" id="CLU_065898_2_2_9"/>
<dbReference type="BioCyc" id="SPNE373153:G1G6V-233-MONOMER"/>
<dbReference type="Proteomes" id="UP000001452">
    <property type="component" value="Chromosome"/>
</dbReference>
<dbReference type="GO" id="GO:0015935">
    <property type="term" value="C:small ribosomal subunit"/>
    <property type="evidence" value="ECO:0007669"/>
    <property type="project" value="InterPro"/>
</dbReference>
<dbReference type="GO" id="GO:0019843">
    <property type="term" value="F:rRNA binding"/>
    <property type="evidence" value="ECO:0007669"/>
    <property type="project" value="UniProtKB-UniRule"/>
</dbReference>
<dbReference type="GO" id="GO:0003735">
    <property type="term" value="F:structural constituent of ribosome"/>
    <property type="evidence" value="ECO:0007669"/>
    <property type="project" value="InterPro"/>
</dbReference>
<dbReference type="GO" id="GO:0006412">
    <property type="term" value="P:translation"/>
    <property type="evidence" value="ECO:0007669"/>
    <property type="project" value="UniProtKB-UniRule"/>
</dbReference>
<dbReference type="FunFam" id="3.30.160.20:FF:000001">
    <property type="entry name" value="30S ribosomal protein S5"/>
    <property type="match status" value="1"/>
</dbReference>
<dbReference type="FunFam" id="3.30.230.10:FF:000002">
    <property type="entry name" value="30S ribosomal protein S5"/>
    <property type="match status" value="1"/>
</dbReference>
<dbReference type="Gene3D" id="3.30.160.20">
    <property type="match status" value="1"/>
</dbReference>
<dbReference type="Gene3D" id="3.30.230.10">
    <property type="match status" value="1"/>
</dbReference>
<dbReference type="HAMAP" id="MF_01307_B">
    <property type="entry name" value="Ribosomal_uS5_B"/>
    <property type="match status" value="1"/>
</dbReference>
<dbReference type="InterPro" id="IPR020568">
    <property type="entry name" value="Ribosomal_Su5_D2-typ_SF"/>
</dbReference>
<dbReference type="InterPro" id="IPR000851">
    <property type="entry name" value="Ribosomal_uS5"/>
</dbReference>
<dbReference type="InterPro" id="IPR005712">
    <property type="entry name" value="Ribosomal_uS5_bac-type"/>
</dbReference>
<dbReference type="InterPro" id="IPR005324">
    <property type="entry name" value="Ribosomal_uS5_C"/>
</dbReference>
<dbReference type="InterPro" id="IPR013810">
    <property type="entry name" value="Ribosomal_uS5_N"/>
</dbReference>
<dbReference type="InterPro" id="IPR018192">
    <property type="entry name" value="Ribosomal_uS5_N_CS"/>
</dbReference>
<dbReference type="InterPro" id="IPR014721">
    <property type="entry name" value="Ribsml_uS5_D2-typ_fold_subgr"/>
</dbReference>
<dbReference type="NCBIfam" id="TIGR01021">
    <property type="entry name" value="rpsE_bact"/>
    <property type="match status" value="1"/>
</dbReference>
<dbReference type="PANTHER" id="PTHR48277">
    <property type="entry name" value="MITOCHONDRIAL RIBOSOMAL PROTEIN S5"/>
    <property type="match status" value="1"/>
</dbReference>
<dbReference type="PANTHER" id="PTHR48277:SF1">
    <property type="entry name" value="MITOCHONDRIAL RIBOSOMAL PROTEIN S5"/>
    <property type="match status" value="1"/>
</dbReference>
<dbReference type="Pfam" id="PF00333">
    <property type="entry name" value="Ribosomal_S5"/>
    <property type="match status" value="1"/>
</dbReference>
<dbReference type="Pfam" id="PF03719">
    <property type="entry name" value="Ribosomal_S5_C"/>
    <property type="match status" value="1"/>
</dbReference>
<dbReference type="SUPFAM" id="SSF54768">
    <property type="entry name" value="dsRNA-binding domain-like"/>
    <property type="match status" value="1"/>
</dbReference>
<dbReference type="SUPFAM" id="SSF54211">
    <property type="entry name" value="Ribosomal protein S5 domain 2-like"/>
    <property type="match status" value="1"/>
</dbReference>
<dbReference type="PROSITE" id="PS00585">
    <property type="entry name" value="RIBOSOMAL_S5"/>
    <property type="match status" value="1"/>
</dbReference>
<dbReference type="PROSITE" id="PS50881">
    <property type="entry name" value="S5_DSRBD"/>
    <property type="match status" value="1"/>
</dbReference>
<keyword id="KW-1185">Reference proteome</keyword>
<keyword id="KW-0687">Ribonucleoprotein</keyword>
<keyword id="KW-0689">Ribosomal protein</keyword>
<keyword id="KW-0694">RNA-binding</keyword>
<keyword id="KW-0699">rRNA-binding</keyword>
<proteinExistence type="inferred from homology"/>
<feature type="chain" id="PRO_0000323206" description="Small ribosomal subunit protein uS5">
    <location>
        <begin position="1"/>
        <end position="164"/>
    </location>
</feature>
<feature type="domain" description="S5 DRBM" evidence="1">
    <location>
        <begin position="10"/>
        <end position="73"/>
    </location>
</feature>
<evidence type="ECO:0000255" key="1">
    <source>
        <dbReference type="HAMAP-Rule" id="MF_01307"/>
    </source>
</evidence>
<evidence type="ECO:0000305" key="2"/>
<sequence length="164" mass="17057">MAFKDNAVELEERVVAVNRVTKVVKGGRRLRFAALVVVGDHNGRVGFGTGKAQEVPEAIRKAVDDAKKNLIEVPMVGTTIPHEVLSEFGGAKVLLKPAVEGSGVAAGGAVRAVVELAGVADITSKSLGSNTPINIVRATVEGLKQLKRAEEIAALRGISVSDLA</sequence>